<keyword id="KW-0007">Acetylation</keyword>
<keyword id="KW-0025">Alternative splicing</keyword>
<keyword id="KW-0028">Amino-acid biosynthesis</keyword>
<keyword id="KW-0055">Arginine biosynthesis</keyword>
<keyword id="KW-0067">ATP-binding</keyword>
<keyword id="KW-0150">Chloroplast</keyword>
<keyword id="KW-0436">Ligase</keyword>
<keyword id="KW-0547">Nucleotide-binding</keyword>
<keyword id="KW-0934">Plastid</keyword>
<keyword id="KW-1185">Reference proteome</keyword>
<keyword id="KW-0809">Transit peptide</keyword>
<comment type="catalytic activity">
    <reaction>
        <text>L-citrulline + L-aspartate + ATP = 2-(N(omega)-L-arginino)succinate + AMP + diphosphate + H(+)</text>
        <dbReference type="Rhea" id="RHEA:10932"/>
        <dbReference type="ChEBI" id="CHEBI:15378"/>
        <dbReference type="ChEBI" id="CHEBI:29991"/>
        <dbReference type="ChEBI" id="CHEBI:30616"/>
        <dbReference type="ChEBI" id="CHEBI:33019"/>
        <dbReference type="ChEBI" id="CHEBI:57472"/>
        <dbReference type="ChEBI" id="CHEBI:57743"/>
        <dbReference type="ChEBI" id="CHEBI:456215"/>
        <dbReference type="EC" id="6.3.4.5"/>
    </reaction>
</comment>
<comment type="pathway">
    <text>Amino-acid biosynthesis; L-arginine biosynthesis; L-arginine from L-ornithine and carbamoyl phosphate: step 2/3.</text>
</comment>
<comment type="subunit">
    <text evidence="1">Homotetramer.</text>
</comment>
<comment type="subcellular location">
    <subcellularLocation>
        <location evidence="3">Plastid</location>
        <location evidence="3">Chloroplast</location>
    </subcellularLocation>
</comment>
<comment type="alternative products">
    <event type="alternative splicing"/>
    <isoform>
        <id>Q9SZX3-1</id>
        <name>1</name>
        <sequence type="displayed"/>
    </isoform>
    <text>A number of isoforms are produced. According to EST sequences.</text>
</comment>
<comment type="similarity">
    <text evidence="3">Belongs to the argininosuccinate synthase family. Type 1 subfamily.</text>
</comment>
<comment type="sequence caution" evidence="3">
    <conflict type="erroneous gene model prediction">
        <sequence resource="EMBL-CDS" id="CAB41123"/>
    </conflict>
</comment>
<comment type="sequence caution" evidence="3">
    <conflict type="erroneous gene model prediction">
        <sequence resource="EMBL-CDS" id="CAB79393"/>
    </conflict>
</comment>
<protein>
    <recommendedName>
        <fullName>Argininosuccinate synthase, chloroplastic</fullName>
        <ecNumber>6.3.4.5</ecNumber>
    </recommendedName>
    <alternativeName>
        <fullName>Citrulline--aspartate ligase</fullName>
    </alternativeName>
</protein>
<gene>
    <name type="ordered locus">At4g24830</name>
    <name type="ORF">F6I7.40</name>
</gene>
<dbReference type="EC" id="6.3.4.5"/>
<dbReference type="EMBL" id="AL049657">
    <property type="protein sequence ID" value="CAB41123.1"/>
    <property type="status" value="ALT_SEQ"/>
    <property type="molecule type" value="Genomic_DNA"/>
</dbReference>
<dbReference type="EMBL" id="AL161562">
    <property type="protein sequence ID" value="CAB79393.1"/>
    <property type="status" value="ALT_SEQ"/>
    <property type="molecule type" value="Genomic_DNA"/>
</dbReference>
<dbReference type="EMBL" id="CP002687">
    <property type="protein sequence ID" value="AEE84968.1"/>
    <property type="molecule type" value="Genomic_DNA"/>
</dbReference>
<dbReference type="EMBL" id="AY065252">
    <property type="protein sequence ID" value="AAL38728.1"/>
    <property type="molecule type" value="mRNA"/>
</dbReference>
<dbReference type="EMBL" id="AY091319">
    <property type="protein sequence ID" value="AAM14258.1"/>
    <property type="molecule type" value="mRNA"/>
</dbReference>
<dbReference type="PIR" id="T06667">
    <property type="entry name" value="T06667"/>
</dbReference>
<dbReference type="RefSeq" id="NP_194214.2">
    <molecule id="Q9SZX3-1"/>
    <property type="nucleotide sequence ID" value="NM_118616.5"/>
</dbReference>
<dbReference type="SMR" id="Q9SZX3"/>
<dbReference type="BioGRID" id="13875">
    <property type="interactions" value="5"/>
</dbReference>
<dbReference type="FunCoup" id="Q9SZX3">
    <property type="interactions" value="1877"/>
</dbReference>
<dbReference type="STRING" id="3702.Q9SZX3"/>
<dbReference type="iPTMnet" id="Q9SZX3"/>
<dbReference type="MetOSite" id="Q9SZX3"/>
<dbReference type="SwissPalm" id="Q9SZX3"/>
<dbReference type="PaxDb" id="3702-AT4G24830.1"/>
<dbReference type="ProteomicsDB" id="246807">
    <molecule id="Q9SZX3-1"/>
</dbReference>
<dbReference type="EnsemblPlants" id="AT4G24830.1">
    <molecule id="Q9SZX3-1"/>
    <property type="protein sequence ID" value="AT4G24830.1"/>
    <property type="gene ID" value="AT4G24830"/>
</dbReference>
<dbReference type="GeneID" id="828586"/>
<dbReference type="Gramene" id="AT4G24830.1">
    <molecule id="Q9SZX3-1"/>
    <property type="protein sequence ID" value="AT4G24830.1"/>
    <property type="gene ID" value="AT4G24830"/>
</dbReference>
<dbReference type="KEGG" id="ath:AT4G24830"/>
<dbReference type="Araport" id="AT4G24830"/>
<dbReference type="TAIR" id="AT4G24830"/>
<dbReference type="eggNOG" id="KOG1706">
    <property type="taxonomic scope" value="Eukaryota"/>
</dbReference>
<dbReference type="InParanoid" id="Q9SZX3"/>
<dbReference type="OMA" id="WRWTVSP"/>
<dbReference type="OrthoDB" id="1688907at2759"/>
<dbReference type="PhylomeDB" id="Q9SZX3"/>
<dbReference type="BioCyc" id="ARA:AT4G24830-MONOMER"/>
<dbReference type="UniPathway" id="UPA00068">
    <property type="reaction ID" value="UER00113"/>
</dbReference>
<dbReference type="CD-CODE" id="4299E36E">
    <property type="entry name" value="Nucleolus"/>
</dbReference>
<dbReference type="PRO" id="PR:Q9SZX3"/>
<dbReference type="Proteomes" id="UP000006548">
    <property type="component" value="Chromosome 4"/>
</dbReference>
<dbReference type="ExpressionAtlas" id="Q9SZX3">
    <property type="expression patterns" value="baseline and differential"/>
</dbReference>
<dbReference type="GO" id="GO:0009507">
    <property type="term" value="C:chloroplast"/>
    <property type="evidence" value="ECO:0007005"/>
    <property type="project" value="TAIR"/>
</dbReference>
<dbReference type="GO" id="GO:0009570">
    <property type="term" value="C:chloroplast stroma"/>
    <property type="evidence" value="ECO:0007005"/>
    <property type="project" value="TAIR"/>
</dbReference>
<dbReference type="GO" id="GO:0009536">
    <property type="term" value="C:plastid"/>
    <property type="evidence" value="ECO:0007005"/>
    <property type="project" value="TAIR"/>
</dbReference>
<dbReference type="GO" id="GO:0004055">
    <property type="term" value="F:argininosuccinate synthase activity"/>
    <property type="evidence" value="ECO:0007669"/>
    <property type="project" value="UniProtKB-EC"/>
</dbReference>
<dbReference type="GO" id="GO:0005524">
    <property type="term" value="F:ATP binding"/>
    <property type="evidence" value="ECO:0007669"/>
    <property type="project" value="UniProtKB-KW"/>
</dbReference>
<dbReference type="GO" id="GO:0006526">
    <property type="term" value="P:L-arginine biosynthetic process"/>
    <property type="evidence" value="ECO:0007669"/>
    <property type="project" value="UniProtKB-UniPathway"/>
</dbReference>
<dbReference type="CDD" id="cd01999">
    <property type="entry name" value="ASS"/>
    <property type="match status" value="1"/>
</dbReference>
<dbReference type="FunFam" id="3.40.50.620:FF:000019">
    <property type="entry name" value="Argininosuccinate synthase"/>
    <property type="match status" value="1"/>
</dbReference>
<dbReference type="FunFam" id="3.90.1260.10:FF:000007">
    <property type="entry name" value="Argininosuccinate synthase"/>
    <property type="match status" value="1"/>
</dbReference>
<dbReference type="Gene3D" id="3.90.1260.10">
    <property type="entry name" value="Argininosuccinate synthetase, chain A, domain 2"/>
    <property type="match status" value="1"/>
</dbReference>
<dbReference type="Gene3D" id="3.40.50.620">
    <property type="entry name" value="HUPs"/>
    <property type="match status" value="1"/>
</dbReference>
<dbReference type="HAMAP" id="MF_00005">
    <property type="entry name" value="Arg_succ_synth_type1"/>
    <property type="match status" value="1"/>
</dbReference>
<dbReference type="InterPro" id="IPR048268">
    <property type="entry name" value="Arginosuc_syn_C"/>
</dbReference>
<dbReference type="InterPro" id="IPR048267">
    <property type="entry name" value="Arginosuc_syn_N"/>
</dbReference>
<dbReference type="InterPro" id="IPR001518">
    <property type="entry name" value="Arginosuc_synth"/>
</dbReference>
<dbReference type="InterPro" id="IPR018223">
    <property type="entry name" value="Arginosuc_synth_CS"/>
</dbReference>
<dbReference type="InterPro" id="IPR023434">
    <property type="entry name" value="Arginosuc_synth_type_1_subfam"/>
</dbReference>
<dbReference type="InterPro" id="IPR024074">
    <property type="entry name" value="AS_cat/multimer_dom_body"/>
</dbReference>
<dbReference type="InterPro" id="IPR014729">
    <property type="entry name" value="Rossmann-like_a/b/a_fold"/>
</dbReference>
<dbReference type="NCBIfam" id="TIGR00032">
    <property type="entry name" value="argG"/>
    <property type="match status" value="1"/>
</dbReference>
<dbReference type="NCBIfam" id="NF001770">
    <property type="entry name" value="PRK00509.1"/>
    <property type="match status" value="1"/>
</dbReference>
<dbReference type="PANTHER" id="PTHR11587">
    <property type="entry name" value="ARGININOSUCCINATE SYNTHASE"/>
    <property type="match status" value="1"/>
</dbReference>
<dbReference type="PANTHER" id="PTHR11587:SF2">
    <property type="entry name" value="ARGININOSUCCINATE SYNTHASE"/>
    <property type="match status" value="1"/>
</dbReference>
<dbReference type="Pfam" id="PF20979">
    <property type="entry name" value="Arginosuc_syn_C"/>
    <property type="match status" value="1"/>
</dbReference>
<dbReference type="Pfam" id="PF00764">
    <property type="entry name" value="Arginosuc_synth"/>
    <property type="match status" value="1"/>
</dbReference>
<dbReference type="SUPFAM" id="SSF52402">
    <property type="entry name" value="Adenine nucleotide alpha hydrolases-like"/>
    <property type="match status" value="1"/>
</dbReference>
<dbReference type="SUPFAM" id="SSF69864">
    <property type="entry name" value="Argininosuccinate synthetase, C-terminal domain"/>
    <property type="match status" value="1"/>
</dbReference>
<dbReference type="PROSITE" id="PS00564">
    <property type="entry name" value="ARGININOSUCCIN_SYN_1"/>
    <property type="match status" value="1"/>
</dbReference>
<dbReference type="PROSITE" id="PS00565">
    <property type="entry name" value="ARGININOSUCCIN_SYN_2"/>
    <property type="match status" value="1"/>
</dbReference>
<name>ASSY_ARATH</name>
<accession>Q9SZX3</accession>
<accession>Q8VZ47</accession>
<proteinExistence type="evidence at protein level"/>
<evidence type="ECO:0000250" key="1"/>
<evidence type="ECO:0000255" key="2"/>
<evidence type="ECO:0000305" key="3"/>
<evidence type="ECO:0007744" key="4">
    <source>
    </source>
</evidence>
<reference key="1">
    <citation type="journal article" date="1999" name="Nature">
        <title>Sequence and analysis of chromosome 4 of the plant Arabidopsis thaliana.</title>
        <authorList>
            <person name="Mayer K.F.X."/>
            <person name="Schueller C."/>
            <person name="Wambutt R."/>
            <person name="Murphy G."/>
            <person name="Volckaert G."/>
            <person name="Pohl T."/>
            <person name="Duesterhoeft A."/>
            <person name="Stiekema W."/>
            <person name="Entian K.-D."/>
            <person name="Terryn N."/>
            <person name="Harris B."/>
            <person name="Ansorge W."/>
            <person name="Brandt P."/>
            <person name="Grivell L.A."/>
            <person name="Rieger M."/>
            <person name="Weichselgartner M."/>
            <person name="de Simone V."/>
            <person name="Obermaier B."/>
            <person name="Mache R."/>
            <person name="Mueller M."/>
            <person name="Kreis M."/>
            <person name="Delseny M."/>
            <person name="Puigdomenech P."/>
            <person name="Watson M."/>
            <person name="Schmidtheini T."/>
            <person name="Reichert B."/>
            <person name="Portetelle D."/>
            <person name="Perez-Alonso M."/>
            <person name="Boutry M."/>
            <person name="Bancroft I."/>
            <person name="Vos P."/>
            <person name="Hoheisel J."/>
            <person name="Zimmermann W."/>
            <person name="Wedler H."/>
            <person name="Ridley P."/>
            <person name="Langham S.-A."/>
            <person name="McCullagh B."/>
            <person name="Bilham L."/>
            <person name="Robben J."/>
            <person name="van der Schueren J."/>
            <person name="Grymonprez B."/>
            <person name="Chuang Y.-J."/>
            <person name="Vandenbussche F."/>
            <person name="Braeken M."/>
            <person name="Weltjens I."/>
            <person name="Voet M."/>
            <person name="Bastiaens I."/>
            <person name="Aert R."/>
            <person name="Defoor E."/>
            <person name="Weitzenegger T."/>
            <person name="Bothe G."/>
            <person name="Ramsperger U."/>
            <person name="Hilbert H."/>
            <person name="Braun M."/>
            <person name="Holzer E."/>
            <person name="Brandt A."/>
            <person name="Peters S."/>
            <person name="van Staveren M."/>
            <person name="Dirkse W."/>
            <person name="Mooijman P."/>
            <person name="Klein Lankhorst R."/>
            <person name="Rose M."/>
            <person name="Hauf J."/>
            <person name="Koetter P."/>
            <person name="Berneiser S."/>
            <person name="Hempel S."/>
            <person name="Feldpausch M."/>
            <person name="Lamberth S."/>
            <person name="Van den Daele H."/>
            <person name="De Keyser A."/>
            <person name="Buysshaert C."/>
            <person name="Gielen J."/>
            <person name="Villarroel R."/>
            <person name="De Clercq R."/>
            <person name="van Montagu M."/>
            <person name="Rogers J."/>
            <person name="Cronin A."/>
            <person name="Quail M.A."/>
            <person name="Bray-Allen S."/>
            <person name="Clark L."/>
            <person name="Doggett J."/>
            <person name="Hall S."/>
            <person name="Kay M."/>
            <person name="Lennard N."/>
            <person name="McLay K."/>
            <person name="Mayes R."/>
            <person name="Pettett A."/>
            <person name="Rajandream M.A."/>
            <person name="Lyne M."/>
            <person name="Benes V."/>
            <person name="Rechmann S."/>
            <person name="Borkova D."/>
            <person name="Bloecker H."/>
            <person name="Scharfe M."/>
            <person name="Grimm M."/>
            <person name="Loehnert T.-H."/>
            <person name="Dose S."/>
            <person name="de Haan M."/>
            <person name="Maarse A.C."/>
            <person name="Schaefer M."/>
            <person name="Mueller-Auer S."/>
            <person name="Gabel C."/>
            <person name="Fuchs M."/>
            <person name="Fartmann B."/>
            <person name="Granderath K."/>
            <person name="Dauner D."/>
            <person name="Herzl A."/>
            <person name="Neumann S."/>
            <person name="Argiriou A."/>
            <person name="Vitale D."/>
            <person name="Liguori R."/>
            <person name="Piravandi E."/>
            <person name="Massenet O."/>
            <person name="Quigley F."/>
            <person name="Clabauld G."/>
            <person name="Muendlein A."/>
            <person name="Felber R."/>
            <person name="Schnabl S."/>
            <person name="Hiller R."/>
            <person name="Schmidt W."/>
            <person name="Lecharny A."/>
            <person name="Aubourg S."/>
            <person name="Chefdor F."/>
            <person name="Cooke R."/>
            <person name="Berger C."/>
            <person name="Monfort A."/>
            <person name="Casacuberta E."/>
            <person name="Gibbons T."/>
            <person name="Weber N."/>
            <person name="Vandenbol M."/>
            <person name="Bargues M."/>
            <person name="Terol J."/>
            <person name="Torres A."/>
            <person name="Perez-Perez A."/>
            <person name="Purnelle B."/>
            <person name="Bent E."/>
            <person name="Johnson S."/>
            <person name="Tacon D."/>
            <person name="Jesse T."/>
            <person name="Heijnen L."/>
            <person name="Schwarz S."/>
            <person name="Scholler P."/>
            <person name="Heber S."/>
            <person name="Francs P."/>
            <person name="Bielke C."/>
            <person name="Frishman D."/>
            <person name="Haase D."/>
            <person name="Lemcke K."/>
            <person name="Mewes H.-W."/>
            <person name="Stocker S."/>
            <person name="Zaccaria P."/>
            <person name="Bevan M."/>
            <person name="Wilson R.K."/>
            <person name="de la Bastide M."/>
            <person name="Habermann K."/>
            <person name="Parnell L."/>
            <person name="Dedhia N."/>
            <person name="Gnoj L."/>
            <person name="Schutz K."/>
            <person name="Huang E."/>
            <person name="Spiegel L."/>
            <person name="Sekhon M."/>
            <person name="Murray J."/>
            <person name="Sheet P."/>
            <person name="Cordes M."/>
            <person name="Abu-Threideh J."/>
            <person name="Stoneking T."/>
            <person name="Kalicki J."/>
            <person name="Graves T."/>
            <person name="Harmon G."/>
            <person name="Edwards J."/>
            <person name="Latreille P."/>
            <person name="Courtney L."/>
            <person name="Cloud J."/>
            <person name="Abbott A."/>
            <person name="Scott K."/>
            <person name="Johnson D."/>
            <person name="Minx P."/>
            <person name="Bentley D."/>
            <person name="Fulton B."/>
            <person name="Miller N."/>
            <person name="Greco T."/>
            <person name="Kemp K."/>
            <person name="Kramer J."/>
            <person name="Fulton L."/>
            <person name="Mardis E."/>
            <person name="Dante M."/>
            <person name="Pepin K."/>
            <person name="Hillier L.W."/>
            <person name="Nelson J."/>
            <person name="Spieth J."/>
            <person name="Ryan E."/>
            <person name="Andrews S."/>
            <person name="Geisel C."/>
            <person name="Layman D."/>
            <person name="Du H."/>
            <person name="Ali J."/>
            <person name="Berghoff A."/>
            <person name="Jones K."/>
            <person name="Drone K."/>
            <person name="Cotton M."/>
            <person name="Joshu C."/>
            <person name="Antonoiu B."/>
            <person name="Zidanic M."/>
            <person name="Strong C."/>
            <person name="Sun H."/>
            <person name="Lamar B."/>
            <person name="Yordan C."/>
            <person name="Ma P."/>
            <person name="Zhong J."/>
            <person name="Preston R."/>
            <person name="Vil D."/>
            <person name="Shekher M."/>
            <person name="Matero A."/>
            <person name="Shah R."/>
            <person name="Swaby I.K."/>
            <person name="O'Shaughnessy A."/>
            <person name="Rodriguez M."/>
            <person name="Hoffman J."/>
            <person name="Till S."/>
            <person name="Granat S."/>
            <person name="Shohdy N."/>
            <person name="Hasegawa A."/>
            <person name="Hameed A."/>
            <person name="Lodhi M."/>
            <person name="Johnson A."/>
            <person name="Chen E."/>
            <person name="Marra M.A."/>
            <person name="Martienssen R."/>
            <person name="McCombie W.R."/>
        </authorList>
    </citation>
    <scope>NUCLEOTIDE SEQUENCE [LARGE SCALE GENOMIC DNA]</scope>
    <source>
        <strain>cv. Columbia</strain>
    </source>
</reference>
<reference key="2">
    <citation type="journal article" date="2017" name="Plant J.">
        <title>Araport11: a complete reannotation of the Arabidopsis thaliana reference genome.</title>
        <authorList>
            <person name="Cheng C.Y."/>
            <person name="Krishnakumar V."/>
            <person name="Chan A.P."/>
            <person name="Thibaud-Nissen F."/>
            <person name="Schobel S."/>
            <person name="Town C.D."/>
        </authorList>
    </citation>
    <scope>GENOME REANNOTATION</scope>
    <source>
        <strain>cv. Columbia</strain>
    </source>
</reference>
<reference key="3">
    <citation type="journal article" date="2003" name="Science">
        <title>Empirical analysis of transcriptional activity in the Arabidopsis genome.</title>
        <authorList>
            <person name="Yamada K."/>
            <person name="Lim J."/>
            <person name="Dale J.M."/>
            <person name="Chen H."/>
            <person name="Shinn P."/>
            <person name="Palm C.J."/>
            <person name="Southwick A.M."/>
            <person name="Wu H.C."/>
            <person name="Kim C.J."/>
            <person name="Nguyen M."/>
            <person name="Pham P.K."/>
            <person name="Cheuk R.F."/>
            <person name="Karlin-Newmann G."/>
            <person name="Liu S.X."/>
            <person name="Lam B."/>
            <person name="Sakano H."/>
            <person name="Wu T."/>
            <person name="Yu G."/>
            <person name="Miranda M."/>
            <person name="Quach H.L."/>
            <person name="Tripp M."/>
            <person name="Chang C.H."/>
            <person name="Lee J.M."/>
            <person name="Toriumi M.J."/>
            <person name="Chan M.M."/>
            <person name="Tang C.C."/>
            <person name="Onodera C.S."/>
            <person name="Deng J.M."/>
            <person name="Akiyama K."/>
            <person name="Ansari Y."/>
            <person name="Arakawa T."/>
            <person name="Banh J."/>
            <person name="Banno F."/>
            <person name="Bowser L."/>
            <person name="Brooks S.Y."/>
            <person name="Carninci P."/>
            <person name="Chao Q."/>
            <person name="Choy N."/>
            <person name="Enju A."/>
            <person name="Goldsmith A.D."/>
            <person name="Gurjal M."/>
            <person name="Hansen N.F."/>
            <person name="Hayashizaki Y."/>
            <person name="Johnson-Hopson C."/>
            <person name="Hsuan V.W."/>
            <person name="Iida K."/>
            <person name="Karnes M."/>
            <person name="Khan S."/>
            <person name="Koesema E."/>
            <person name="Ishida J."/>
            <person name="Jiang P.X."/>
            <person name="Jones T."/>
            <person name="Kawai J."/>
            <person name="Kamiya A."/>
            <person name="Meyers C."/>
            <person name="Nakajima M."/>
            <person name="Narusaka M."/>
            <person name="Seki M."/>
            <person name="Sakurai T."/>
            <person name="Satou M."/>
            <person name="Tamse R."/>
            <person name="Vaysberg M."/>
            <person name="Wallender E.K."/>
            <person name="Wong C."/>
            <person name="Yamamura Y."/>
            <person name="Yuan S."/>
            <person name="Shinozaki K."/>
            <person name="Davis R.W."/>
            <person name="Theologis A."/>
            <person name="Ecker J.R."/>
        </authorList>
    </citation>
    <scope>NUCLEOTIDE SEQUENCE [LARGE SCALE MRNA]</scope>
    <source>
        <strain>cv. Columbia</strain>
    </source>
</reference>
<reference key="4">
    <citation type="journal article" date="2012" name="Mol. Cell. Proteomics">
        <title>Comparative large-scale characterisation of plant vs. mammal proteins reveals similar and idiosyncratic N-alpha acetylation features.</title>
        <authorList>
            <person name="Bienvenut W.V."/>
            <person name="Sumpton D."/>
            <person name="Martinez A."/>
            <person name="Lilla S."/>
            <person name="Espagne C."/>
            <person name="Meinnel T."/>
            <person name="Giglione C."/>
        </authorList>
    </citation>
    <scope>ACETYLATION [LARGE SCALE ANALYSIS] AT ALA-74</scope>
    <scope>CLEAVAGE OF TRANSIT PEPTIDE [LARGE SCALE ANALYSIS] AFTER ARG-73</scope>
    <scope>IDENTIFICATION BY MASS SPECTROMETRY [LARGE SCALE ANALYSIS]</scope>
</reference>
<feature type="transit peptide" description="Chloroplast" evidence="2 4">
    <location>
        <begin position="1"/>
        <end position="73"/>
    </location>
</feature>
<feature type="chain" id="PRO_0000002412" description="Argininosuccinate synthase, chloroplastic">
    <location>
        <begin position="74"/>
        <end position="494"/>
    </location>
</feature>
<feature type="binding site" evidence="1">
    <location>
        <begin position="102"/>
        <end position="110"/>
    </location>
    <ligand>
        <name>ATP</name>
        <dbReference type="ChEBI" id="CHEBI:30616"/>
    </ligand>
</feature>
<feature type="binding site" evidence="1">
    <location>
        <position position="129"/>
    </location>
    <ligand>
        <name>ATP</name>
        <dbReference type="ChEBI" id="CHEBI:30616"/>
    </ligand>
</feature>
<feature type="binding site" evidence="1">
    <location>
        <position position="181"/>
    </location>
    <ligand>
        <name>L-citrulline</name>
        <dbReference type="ChEBI" id="CHEBI:57743"/>
    </ligand>
</feature>
<feature type="binding site" evidence="1">
    <location>
        <position position="186"/>
    </location>
    <ligand>
        <name>L-citrulline</name>
        <dbReference type="ChEBI" id="CHEBI:57743"/>
    </ligand>
</feature>
<feature type="binding site" evidence="1">
    <location>
        <position position="211"/>
    </location>
    <ligand>
        <name>ATP</name>
        <dbReference type="ChEBI" id="CHEBI:30616"/>
    </ligand>
</feature>
<feature type="binding site" evidence="1">
    <location>
        <position position="213"/>
    </location>
    <ligand>
        <name>L-aspartate</name>
        <dbReference type="ChEBI" id="CHEBI:29991"/>
    </ligand>
</feature>
<feature type="binding site" evidence="1">
    <location>
        <position position="217"/>
    </location>
    <ligand>
        <name>L-aspartate</name>
        <dbReference type="ChEBI" id="CHEBI:29991"/>
    </ligand>
</feature>
<feature type="binding site" evidence="1">
    <location>
        <position position="217"/>
    </location>
    <ligand>
        <name>L-citrulline</name>
        <dbReference type="ChEBI" id="CHEBI:57743"/>
    </ligand>
</feature>
<feature type="binding site" evidence="1">
    <location>
        <position position="218"/>
    </location>
    <ligand>
        <name>L-aspartate</name>
        <dbReference type="ChEBI" id="CHEBI:29991"/>
    </ligand>
</feature>
<feature type="binding site" evidence="1">
    <location>
        <position position="221"/>
    </location>
    <ligand>
        <name>L-citrulline</name>
        <dbReference type="ChEBI" id="CHEBI:57743"/>
    </ligand>
</feature>
<feature type="binding site" evidence="1">
    <location>
        <position position="270"/>
    </location>
    <ligand>
        <name>L-citrulline</name>
        <dbReference type="ChEBI" id="CHEBI:57743"/>
    </ligand>
</feature>
<feature type="binding site" evidence="1">
    <location>
        <position position="279"/>
    </location>
    <ligand>
        <name>L-citrulline</name>
        <dbReference type="ChEBI" id="CHEBI:57743"/>
    </ligand>
</feature>
<feature type="binding site" evidence="1">
    <location>
        <position position="355"/>
    </location>
    <ligand>
        <name>L-citrulline</name>
        <dbReference type="ChEBI" id="CHEBI:57743"/>
    </ligand>
</feature>
<feature type="binding site" evidence="1">
    <location>
        <position position="367"/>
    </location>
    <ligand>
        <name>L-citrulline</name>
        <dbReference type="ChEBI" id="CHEBI:57743"/>
    </ligand>
</feature>
<feature type="modified residue" description="N-acetylalanine" evidence="4">
    <location>
        <position position="74"/>
    </location>
</feature>
<sequence>MAEISATSFPSSSSSALVIRSSHNGSLKCQNVAVPKTTSQFQELSLKRSQLVGNAVVTGHVTGSRSCKNQAIRAVLSGDGTALTTDSKEAGLRGKLKKVVLAYSGGLDTSVIVPWLKENYGCEVVCFTADVGQGIKELEGLEQKAKASGASQLVVKDLTEEFVKDFIFPCLRAGAIYERKYLLGTSMARPVIAKAMVDVAAEVGADAVAHGCTGKGNDQVRFELTFFSLNPELKVVAPWREWEIQGREDAIEYAKKHNVPVPVTKKSIYSRDRNLWHLSHEGDLLEDPANEPKKDMYMMSVDPEDAPDQPEYIEIGIESGLPVALNGKALSPATLLAELNTIGGKHGIGRIDMVENRLVGMKSRGVYETPGGTILFAAVQELESLTLDRESIQVKDTLALKYAEMVYAGRWFDPLRESMDAFMEKITETTTGSVTLKLYKGSVSVTGRQSPNSLYRQDISSFEGSEIYNQADAAGFIRLYGLPMKIRAMLKKIS</sequence>
<organism>
    <name type="scientific">Arabidopsis thaliana</name>
    <name type="common">Mouse-ear cress</name>
    <dbReference type="NCBI Taxonomy" id="3702"/>
    <lineage>
        <taxon>Eukaryota</taxon>
        <taxon>Viridiplantae</taxon>
        <taxon>Streptophyta</taxon>
        <taxon>Embryophyta</taxon>
        <taxon>Tracheophyta</taxon>
        <taxon>Spermatophyta</taxon>
        <taxon>Magnoliopsida</taxon>
        <taxon>eudicotyledons</taxon>
        <taxon>Gunneridae</taxon>
        <taxon>Pentapetalae</taxon>
        <taxon>rosids</taxon>
        <taxon>malvids</taxon>
        <taxon>Brassicales</taxon>
        <taxon>Brassicaceae</taxon>
        <taxon>Camelineae</taxon>
        <taxon>Arabidopsis</taxon>
    </lineage>
</organism>